<name>NAGS_LACBS</name>
<organism>
    <name type="scientific">Laccaria bicolor (strain S238N-H82 / ATCC MYA-4686)</name>
    <name type="common">Bicoloured deceiver</name>
    <name type="synonym">Laccaria laccata var. bicolor</name>
    <dbReference type="NCBI Taxonomy" id="486041"/>
    <lineage>
        <taxon>Eukaryota</taxon>
        <taxon>Fungi</taxon>
        <taxon>Dikarya</taxon>
        <taxon>Basidiomycota</taxon>
        <taxon>Agaricomycotina</taxon>
        <taxon>Agaricomycetes</taxon>
        <taxon>Agaricomycetidae</taxon>
        <taxon>Agaricales</taxon>
        <taxon>Agaricineae</taxon>
        <taxon>Hydnangiaceae</taxon>
        <taxon>Laccaria</taxon>
    </lineage>
</organism>
<keyword id="KW-0012">Acyltransferase</keyword>
<keyword id="KW-0028">Amino-acid biosynthesis</keyword>
<keyword id="KW-0496">Mitochondrion</keyword>
<keyword id="KW-1185">Reference proteome</keyword>
<keyword id="KW-0808">Transferase</keyword>
<keyword id="KW-0809">Transit peptide</keyword>
<protein>
    <recommendedName>
        <fullName>Amino-acid acetyltransferase, mitochondrial</fullName>
        <ecNumber>2.3.1.1</ecNumber>
    </recommendedName>
    <alternativeName>
        <fullName>Arginine-requiring protein 2</fullName>
    </alternativeName>
    <alternativeName>
        <fullName>Glutamate N-acetyltransferase</fullName>
    </alternativeName>
    <alternativeName>
        <fullName>N-acetylglutamate synthase</fullName>
        <shortName>AGS</shortName>
        <shortName>NAGS</shortName>
    </alternativeName>
</protein>
<reference key="1">
    <citation type="journal article" date="2008" name="Nature">
        <title>The genome of Laccaria bicolor provides insights into mycorrhizal symbiosis.</title>
        <authorList>
            <person name="Martin F."/>
            <person name="Aerts A."/>
            <person name="Ahren D."/>
            <person name="Brun A."/>
            <person name="Danchin E.G.J."/>
            <person name="Duchaussoy F."/>
            <person name="Gibon J."/>
            <person name="Kohler A."/>
            <person name="Lindquist E."/>
            <person name="Pereda V."/>
            <person name="Salamov A."/>
            <person name="Shapiro H.J."/>
            <person name="Wuyts J."/>
            <person name="Blaudez D."/>
            <person name="Buee M."/>
            <person name="Brokstein P."/>
            <person name="Canbaeck B."/>
            <person name="Cohen D."/>
            <person name="Courty P.E."/>
            <person name="Coutinho P.M."/>
            <person name="Delaruelle C."/>
            <person name="Detter J.C."/>
            <person name="Deveau A."/>
            <person name="DiFazio S."/>
            <person name="Duplessis S."/>
            <person name="Fraissinet-Tachet L."/>
            <person name="Lucic E."/>
            <person name="Frey-Klett P."/>
            <person name="Fourrey C."/>
            <person name="Feussner I."/>
            <person name="Gay G."/>
            <person name="Grimwood J."/>
            <person name="Hoegger P.J."/>
            <person name="Jain P."/>
            <person name="Kilaru S."/>
            <person name="Labbe J."/>
            <person name="Lin Y.C."/>
            <person name="Legue V."/>
            <person name="Le Tacon F."/>
            <person name="Marmeisse R."/>
            <person name="Melayah D."/>
            <person name="Montanini B."/>
            <person name="Muratet M."/>
            <person name="Nehls U."/>
            <person name="Niculita-Hirzel H."/>
            <person name="Oudot-Le Secq M.P."/>
            <person name="Peter M."/>
            <person name="Quesneville H."/>
            <person name="Rajashekar B."/>
            <person name="Reich M."/>
            <person name="Rouhier N."/>
            <person name="Schmutz J."/>
            <person name="Yin T."/>
            <person name="Chalot M."/>
            <person name="Henrissat B."/>
            <person name="Kuees U."/>
            <person name="Lucas S."/>
            <person name="Van de Peer Y."/>
            <person name="Podila G.K."/>
            <person name="Polle A."/>
            <person name="Pukkila P.J."/>
            <person name="Richardson P.M."/>
            <person name="Rouze P."/>
            <person name="Sanders I.R."/>
            <person name="Stajich J.E."/>
            <person name="Tunlid A."/>
            <person name="Tuskan G."/>
            <person name="Grigoriev I.V."/>
        </authorList>
    </citation>
    <scope>NUCLEOTIDE SEQUENCE [LARGE SCALE GENOMIC DNA]</scope>
    <source>
        <strain>S238N-H82 / ATCC MYA-4686</strain>
    </source>
</reference>
<gene>
    <name type="primary">ARG2</name>
    <name type="ORF">LACBIDRAFT_242719</name>
</gene>
<proteinExistence type="inferred from homology"/>
<dbReference type="EC" id="2.3.1.1"/>
<dbReference type="EMBL" id="DS547091">
    <property type="protein sequence ID" value="EDR15754.1"/>
    <property type="molecule type" value="Genomic_DNA"/>
</dbReference>
<dbReference type="RefSeq" id="XP_001873962.1">
    <property type="nucleotide sequence ID" value="XM_001873927.1"/>
</dbReference>
<dbReference type="SMR" id="B0CR45"/>
<dbReference type="FunCoup" id="B0CR45">
    <property type="interactions" value="109"/>
</dbReference>
<dbReference type="STRING" id="486041.B0CR45"/>
<dbReference type="GeneID" id="6068984"/>
<dbReference type="KEGG" id="lbc:LACBIDRAFT_242719"/>
<dbReference type="HOGENOM" id="CLU_013088_1_0_1"/>
<dbReference type="InParanoid" id="B0CR45"/>
<dbReference type="OrthoDB" id="5585968at2759"/>
<dbReference type="UniPathway" id="UPA00068">
    <property type="reaction ID" value="UER00106"/>
</dbReference>
<dbReference type="Proteomes" id="UP000001194">
    <property type="component" value="Unassembled WGS sequence"/>
</dbReference>
<dbReference type="GO" id="GO:0005759">
    <property type="term" value="C:mitochondrial matrix"/>
    <property type="evidence" value="ECO:0007669"/>
    <property type="project" value="TreeGrafter"/>
</dbReference>
<dbReference type="GO" id="GO:0004042">
    <property type="term" value="F:L-glutamate N-acetyltransferase activity"/>
    <property type="evidence" value="ECO:0007669"/>
    <property type="project" value="TreeGrafter"/>
</dbReference>
<dbReference type="GO" id="GO:0006526">
    <property type="term" value="P:L-arginine biosynthetic process"/>
    <property type="evidence" value="ECO:0007669"/>
    <property type="project" value="UniProtKB-UniPathway"/>
</dbReference>
<dbReference type="GO" id="GO:0006592">
    <property type="term" value="P:ornithine biosynthetic process"/>
    <property type="evidence" value="ECO:0007669"/>
    <property type="project" value="TreeGrafter"/>
</dbReference>
<dbReference type="FunFam" id="3.40.630.30:FF:000070">
    <property type="entry name" value="Acetylglutamate kinase"/>
    <property type="match status" value="1"/>
</dbReference>
<dbReference type="Gene3D" id="3.40.630.30">
    <property type="match status" value="1"/>
</dbReference>
<dbReference type="Gene3D" id="3.40.1160.10">
    <property type="entry name" value="Acetylglutamate kinase-like"/>
    <property type="match status" value="1"/>
</dbReference>
<dbReference type="InterPro" id="IPR036393">
    <property type="entry name" value="AceGlu_kinase-like_sf"/>
</dbReference>
<dbReference type="InterPro" id="IPR006855">
    <property type="entry name" value="Vertebrate-like_GNAT_dom"/>
</dbReference>
<dbReference type="PANTHER" id="PTHR23342:SF4">
    <property type="entry name" value="AMINO-ACID ACETYLTRANSFERASE, MITOCHONDRIAL"/>
    <property type="match status" value="1"/>
</dbReference>
<dbReference type="PANTHER" id="PTHR23342">
    <property type="entry name" value="N-ACETYLGLUTAMATE SYNTHASE"/>
    <property type="match status" value="1"/>
</dbReference>
<dbReference type="Pfam" id="PF04768">
    <property type="entry name" value="NAT"/>
    <property type="match status" value="2"/>
</dbReference>
<dbReference type="PROSITE" id="PS51731">
    <property type="entry name" value="GNAT_NAGS"/>
    <property type="match status" value="1"/>
</dbReference>
<feature type="transit peptide" description="Mitochondrion" evidence="2">
    <location>
        <begin position="1"/>
        <end status="unknown"/>
    </location>
</feature>
<feature type="chain" id="PRO_0000372565" description="Amino-acid acetyltransferase, mitochondrial">
    <location>
        <begin status="unknown"/>
        <end position="559"/>
    </location>
</feature>
<feature type="domain" description="N-acetyltransferase" evidence="3">
    <location>
        <begin position="362"/>
        <end position="538"/>
    </location>
</feature>
<feature type="region of interest" description="Disordered" evidence="4">
    <location>
        <begin position="162"/>
        <end position="188"/>
    </location>
</feature>
<accession>B0CR45</accession>
<comment type="function">
    <text evidence="1">N-acetylglutamate synthase involved in arginine biosynthesis.</text>
</comment>
<comment type="catalytic activity">
    <reaction>
        <text>L-glutamate + acetyl-CoA = N-acetyl-L-glutamate + CoA + H(+)</text>
        <dbReference type="Rhea" id="RHEA:24292"/>
        <dbReference type="ChEBI" id="CHEBI:15378"/>
        <dbReference type="ChEBI" id="CHEBI:29985"/>
        <dbReference type="ChEBI" id="CHEBI:44337"/>
        <dbReference type="ChEBI" id="CHEBI:57287"/>
        <dbReference type="ChEBI" id="CHEBI:57288"/>
        <dbReference type="EC" id="2.3.1.1"/>
    </reaction>
</comment>
<comment type="pathway">
    <text>Amino-acid biosynthesis; L-arginine biosynthesis; N(2)-acetyl-L-ornithine from L-glutamate: step 1/4.</text>
</comment>
<comment type="subcellular location">
    <subcellularLocation>
        <location evidence="1">Mitochondrion</location>
    </subcellularLocation>
</comment>
<comment type="similarity">
    <text evidence="5">Belongs to the acetyltransferase family.</text>
</comment>
<sequence>MENVQDFIISILRANPSLRDTRSFLASFGPRPTKLFQEQQSQDIIIPPPPSTPPASTTATPTIPIQPTPSPVITSILNPVYNRTALVKIQGPFTDVQLDSITRGLVYLSKLGLVSVIVVDNDNQPRGDQDERRVIIDEVMRVVSSLEKHGARARPITGAIVRLGPKPGSEDPTSELDFTPPETHTLPPDLTPLRSALRAGEIPVVSPFALDSFCRSVRVDSNDVIAGLSADAPSDFSKEVELAPFRLMIINRHGGIPSYARSGYPHLLINLSSEYQHIHETFREEWRHTHPSALSNLALARTCLAYMPPTSSAIMVSHKSPSSLIGNLITNKPAVSSSLPHALLQGNQRLTPHTPTLLRRGLPVQVFHSVSDIDKIKLNALLEQSFGRKLDSASFYARLEKKLDFVIVAGDYVGAAIVTNEDDPVSGKPISYLDKFAVLPSHQGDGTVDFLWVALHDETYGLGHPFSANPNGGKGGKGEGRDLVWRSRSKNPVNKWYFDRSSGHLRMGSWVLFWCDAEKRLKIEEGRRGSAGLSYVEDWEEGRLRTWAEAVSGIPSSWM</sequence>
<evidence type="ECO:0000250" key="1"/>
<evidence type="ECO:0000255" key="2"/>
<evidence type="ECO:0000255" key="3">
    <source>
        <dbReference type="PROSITE-ProRule" id="PRU00532"/>
    </source>
</evidence>
<evidence type="ECO:0000256" key="4">
    <source>
        <dbReference type="SAM" id="MobiDB-lite"/>
    </source>
</evidence>
<evidence type="ECO:0000305" key="5"/>